<evidence type="ECO:0000255" key="1"/>
<evidence type="ECO:0000269" key="2">
    <source>
    </source>
</evidence>
<evidence type="ECO:0000269" key="3">
    <source>
    </source>
</evidence>
<evidence type="ECO:0000305" key="4"/>
<gene>
    <name type="primary">bepC</name>
    <name type="ordered locus">BR0945</name>
    <name type="ordered locus">BS1330_I0941</name>
</gene>
<protein>
    <recommendedName>
        <fullName>Outer membrane efflux protein BepC</fullName>
    </recommendedName>
</protein>
<proteinExistence type="evidence at protein level"/>
<accession>Q8G0Y6</accession>
<accession>G0K9M2</accession>
<reference key="1">
    <citation type="journal article" date="2002" name="Proc. Natl. Acad. Sci. U.S.A.">
        <title>The Brucella suis genome reveals fundamental similarities between animal and plant pathogens and symbionts.</title>
        <authorList>
            <person name="Paulsen I.T."/>
            <person name="Seshadri R."/>
            <person name="Nelson K.E."/>
            <person name="Eisen J.A."/>
            <person name="Heidelberg J.F."/>
            <person name="Read T.D."/>
            <person name="Dodson R.J."/>
            <person name="Umayam L.A."/>
            <person name="Brinkac L.M."/>
            <person name="Beanan M.J."/>
            <person name="Daugherty S.C."/>
            <person name="DeBoy R.T."/>
            <person name="Durkin A.S."/>
            <person name="Kolonay J.F."/>
            <person name="Madupu R."/>
            <person name="Nelson W.C."/>
            <person name="Ayodeji B."/>
            <person name="Kraul M."/>
            <person name="Shetty J."/>
            <person name="Malek J.A."/>
            <person name="Van Aken S.E."/>
            <person name="Riedmuller S."/>
            <person name="Tettelin H."/>
            <person name="Gill S.R."/>
            <person name="White O."/>
            <person name="Salzberg S.L."/>
            <person name="Hoover D.L."/>
            <person name="Lindler L.E."/>
            <person name="Halling S.M."/>
            <person name="Boyle S.M."/>
            <person name="Fraser C.M."/>
        </authorList>
    </citation>
    <scope>NUCLEOTIDE SEQUENCE [LARGE SCALE GENOMIC DNA]</scope>
    <source>
        <strain>1330</strain>
    </source>
</reference>
<reference key="2">
    <citation type="journal article" date="2011" name="J. Bacteriol.">
        <title>Revised genome sequence of Brucella suis 1330.</title>
        <authorList>
            <person name="Tae H."/>
            <person name="Shallom S."/>
            <person name="Settlage R."/>
            <person name="Preston D."/>
            <person name="Adams L.G."/>
            <person name="Garner H.R."/>
        </authorList>
    </citation>
    <scope>NUCLEOTIDE SEQUENCE [LARGE SCALE GENOMIC DNA]</scope>
    <source>
        <strain>1330</strain>
    </source>
</reference>
<reference key="3">
    <citation type="journal article" date="2007" name="Infect. Immun.">
        <title>The TolC homologue of Brucella suis is involved in resistance to antimicrobial compounds and virulence.</title>
        <authorList>
            <person name="Posadas D.M."/>
            <person name="Martin F.A."/>
            <person name="Sabio y Garcia J.V."/>
            <person name="Spera J.M."/>
            <person name="Delpino M.V."/>
            <person name="Baldi P."/>
            <person name="Campos E."/>
            <person name="Cravero S.L."/>
            <person name="Zorreguieta A."/>
        </authorList>
    </citation>
    <scope>FUNCTION</scope>
    <scope>SUBUNIT</scope>
    <scope>DISRUPTION PHENOTYPE</scope>
    <source>
        <strain>1330</strain>
    </source>
</reference>
<reference key="4">
    <citation type="journal article" date="2009" name="J. Bacteriol.">
        <title>Interplay between two RND systems mediating antimicrobial resistance in Brucella suis.</title>
        <authorList>
            <person name="Martin F.A."/>
            <person name="Posadas D.M."/>
            <person name="Carrica M.C."/>
            <person name="Cravero S.L."/>
            <person name="O'Callaghan D."/>
            <person name="Zorreguieta A."/>
        </authorList>
    </citation>
    <scope>SUBUNIT</scope>
    <source>
        <strain>1330</strain>
    </source>
</reference>
<name>BEPC_BRUSU</name>
<organism>
    <name type="scientific">Brucella suis biovar 1 (strain 1330)</name>
    <dbReference type="NCBI Taxonomy" id="204722"/>
    <lineage>
        <taxon>Bacteria</taxon>
        <taxon>Pseudomonadati</taxon>
        <taxon>Pseudomonadota</taxon>
        <taxon>Alphaproteobacteria</taxon>
        <taxon>Hyphomicrobiales</taxon>
        <taxon>Brucellaceae</taxon>
        <taxon>Brucella/Ochrobactrum group</taxon>
        <taxon>Brucella</taxon>
    </lineage>
</organism>
<dbReference type="EMBL" id="AE014291">
    <property type="protein sequence ID" value="AAN29871.1"/>
    <property type="molecule type" value="Genomic_DNA"/>
</dbReference>
<dbReference type="EMBL" id="CP002997">
    <property type="protein sequence ID" value="AEM18288.1"/>
    <property type="molecule type" value="Genomic_DNA"/>
</dbReference>
<dbReference type="RefSeq" id="WP_011068960.1">
    <property type="nucleotide sequence ID" value="NZ_KN046804.1"/>
</dbReference>
<dbReference type="SMR" id="Q8G0Y6"/>
<dbReference type="GeneID" id="45052002"/>
<dbReference type="KEGG" id="bms:BR0945"/>
<dbReference type="KEGG" id="bsi:BS1330_I0941"/>
<dbReference type="HOGENOM" id="CLU_012817_0_1_5"/>
<dbReference type="Proteomes" id="UP000007104">
    <property type="component" value="Chromosome I"/>
</dbReference>
<dbReference type="GO" id="GO:0009279">
    <property type="term" value="C:cell outer membrane"/>
    <property type="evidence" value="ECO:0007669"/>
    <property type="project" value="UniProtKB-SubCell"/>
</dbReference>
<dbReference type="GO" id="GO:1990281">
    <property type="term" value="C:efflux pump complex"/>
    <property type="evidence" value="ECO:0007669"/>
    <property type="project" value="TreeGrafter"/>
</dbReference>
<dbReference type="GO" id="GO:0015562">
    <property type="term" value="F:efflux transmembrane transporter activity"/>
    <property type="evidence" value="ECO:0007669"/>
    <property type="project" value="InterPro"/>
</dbReference>
<dbReference type="GO" id="GO:0015288">
    <property type="term" value="F:porin activity"/>
    <property type="evidence" value="ECO:0007669"/>
    <property type="project" value="TreeGrafter"/>
</dbReference>
<dbReference type="GO" id="GO:0046677">
    <property type="term" value="P:response to antibiotic"/>
    <property type="evidence" value="ECO:0007669"/>
    <property type="project" value="UniProtKB-KW"/>
</dbReference>
<dbReference type="Gene3D" id="1.20.1600.10">
    <property type="entry name" value="Outer membrane efflux proteins (OEP)"/>
    <property type="match status" value="1"/>
</dbReference>
<dbReference type="InterPro" id="IPR051906">
    <property type="entry name" value="Bacterial_OMF"/>
</dbReference>
<dbReference type="InterPro" id="IPR003423">
    <property type="entry name" value="OMP_efflux"/>
</dbReference>
<dbReference type="InterPro" id="IPR010130">
    <property type="entry name" value="T1SS_OMP_TolC"/>
</dbReference>
<dbReference type="NCBIfam" id="TIGR01844">
    <property type="entry name" value="type_I_sec_TolC"/>
    <property type="match status" value="1"/>
</dbReference>
<dbReference type="PANTHER" id="PTHR30026:SF22">
    <property type="entry name" value="OUTER MEMBRANE EFFLUX PROTEIN"/>
    <property type="match status" value="1"/>
</dbReference>
<dbReference type="PANTHER" id="PTHR30026">
    <property type="entry name" value="OUTER MEMBRANE PROTEIN TOLC"/>
    <property type="match status" value="1"/>
</dbReference>
<dbReference type="Pfam" id="PF02321">
    <property type="entry name" value="OEP"/>
    <property type="match status" value="2"/>
</dbReference>
<dbReference type="SUPFAM" id="SSF56954">
    <property type="entry name" value="Outer membrane efflux proteins (OEP)"/>
    <property type="match status" value="1"/>
</dbReference>
<feature type="signal peptide" evidence="1">
    <location>
        <begin position="1"/>
        <end position="28"/>
    </location>
</feature>
<feature type="chain" id="PRO_0000390647" description="Outer membrane efflux protein BepC">
    <location>
        <begin position="29"/>
        <end position="456"/>
    </location>
</feature>
<feature type="coiled-coil region" evidence="1">
    <location>
        <begin position="312"/>
        <end position="341"/>
    </location>
</feature>
<comment type="function">
    <text evidence="2">Involved in the efflux of toxic and relatively hydrophobic compounds. Influences survival inside the host.</text>
</comment>
<comment type="subunit">
    <text evidence="2 3">Probably part of a tripartite efflux pump, which is composed of an outer membrane efflux protein, an inner membrane protein and a protein that expands the periplasmic space. Could form a tripartite pump with BepD and BepE or with BepF and BepG.</text>
</comment>
<comment type="subcellular location">
    <subcellularLocation>
        <location evidence="4">Cell outer membrane</location>
    </subcellularLocation>
</comment>
<comment type="disruption phenotype">
    <text evidence="2">Mutation strongly affects resistance to bile salts and toxic chemicals, and significantly decreases the resistance to antibiotics such as erythromycin, ampicillin, tetracycline, and norfloxacin. The mutant also has attenuated effects in the mouse model of infection.</text>
</comment>
<comment type="similarity">
    <text evidence="4">Belongs to the outer membrane factor (OMF) (TC 1.B.17) family.</text>
</comment>
<keyword id="KW-0046">Antibiotic resistance</keyword>
<keyword id="KW-0998">Cell outer membrane</keyword>
<keyword id="KW-0175">Coiled coil</keyword>
<keyword id="KW-0472">Membrane</keyword>
<keyword id="KW-0732">Signal</keyword>
<keyword id="KW-0812">Transmembrane</keyword>
<keyword id="KW-1134">Transmembrane beta strand</keyword>
<keyword id="KW-0813">Transport</keyword>
<sequence length="456" mass="48518">MRYTVFKACKELVAAAVLLSGTVLTGQAALSETLTGALVKAYKNNAPLNSSRAGVRIQDENVAIAKSAYRPQITGSYNISRGKTPATDYRTTGTVGIQLNQMLFDGFQTRNNVAAAETQVFAQRENLRNDEQNTLYQAVAAYMDVYQLRQIAALREKNLAAMNEQVRAARARLDVGEGTRTDVAQAEASRSTAIAALNAARADVKTAEATYMQVVGSLPDKLTPASAARHLPQSPSQAYASALASHPGILATKYAVNAAGYNVKAKEGALLPTIGLTASASQLDTIAGTDMGDGNTASIGVGVNIPIYTGGRTSAQIRQSKEQLGQARIEVDVVQDKVRQAISSAWSQLEAARASVAANRDGIAAAQLALDGVIEERKVGQRTTLDVLNAQNDLVAVQIALVQAEHDVVVASYALLNATGRMTADQLGLQVAQYKPEEHYKAVKDKWFGLRTPDGR</sequence>